<geneLocation type="chloroplast"/>
<comment type="function">
    <text evidence="1">May help in the organization of the PsaL subunit.</text>
</comment>
<comment type="subcellular location">
    <subcellularLocation>
        <location evidence="1">Plastid</location>
        <location evidence="1">Chloroplast thylakoid membrane</location>
        <topology evidence="1">Single-pass membrane protein</topology>
    </subcellularLocation>
</comment>
<comment type="similarity">
    <text evidence="3">Belongs to the PsaI family.</text>
</comment>
<organism>
    <name type="scientific">Lotus japonicus</name>
    <name type="common">Lotus corniculatus var. japonicus</name>
    <dbReference type="NCBI Taxonomy" id="34305"/>
    <lineage>
        <taxon>Eukaryota</taxon>
        <taxon>Viridiplantae</taxon>
        <taxon>Streptophyta</taxon>
        <taxon>Embryophyta</taxon>
        <taxon>Tracheophyta</taxon>
        <taxon>Spermatophyta</taxon>
        <taxon>Magnoliopsida</taxon>
        <taxon>eudicotyledons</taxon>
        <taxon>Gunneridae</taxon>
        <taxon>Pentapetalae</taxon>
        <taxon>rosids</taxon>
        <taxon>fabids</taxon>
        <taxon>Fabales</taxon>
        <taxon>Fabaceae</taxon>
        <taxon>Papilionoideae</taxon>
        <taxon>50 kb inversion clade</taxon>
        <taxon>NPAAA clade</taxon>
        <taxon>Hologalegina</taxon>
        <taxon>robinioid clade</taxon>
        <taxon>Loteae</taxon>
        <taxon>Lotus</taxon>
    </lineage>
</organism>
<proteinExistence type="inferred from homology"/>
<sequence>MTNLPSIFVPLVGLVFPAMAMASLFLYLQKNKIF</sequence>
<feature type="chain" id="PRO_0000194657" description="Photosystem I reaction center subunit VIII">
    <location>
        <begin position="1"/>
        <end position="34"/>
    </location>
</feature>
<feature type="transmembrane region" description="Helical" evidence="2">
    <location>
        <begin position="7"/>
        <end position="27"/>
    </location>
</feature>
<dbReference type="EMBL" id="AP002983">
    <property type="protein sequence ID" value="BAB33206.1"/>
    <property type="molecule type" value="Genomic_DNA"/>
</dbReference>
<dbReference type="RefSeq" id="NP_084808.1">
    <property type="nucleotide sequence ID" value="NC_002694.1"/>
</dbReference>
<dbReference type="SMR" id="Q9BBS0"/>
<dbReference type="GeneID" id="802902"/>
<dbReference type="GO" id="GO:0009535">
    <property type="term" value="C:chloroplast thylakoid membrane"/>
    <property type="evidence" value="ECO:0007669"/>
    <property type="project" value="UniProtKB-SubCell"/>
</dbReference>
<dbReference type="GO" id="GO:0009522">
    <property type="term" value="C:photosystem I"/>
    <property type="evidence" value="ECO:0007669"/>
    <property type="project" value="UniProtKB-KW"/>
</dbReference>
<dbReference type="GO" id="GO:0015979">
    <property type="term" value="P:photosynthesis"/>
    <property type="evidence" value="ECO:0007669"/>
    <property type="project" value="UniProtKB-UniRule"/>
</dbReference>
<dbReference type="HAMAP" id="MF_00431">
    <property type="entry name" value="PSI_PsaI"/>
    <property type="match status" value="1"/>
</dbReference>
<dbReference type="InterPro" id="IPR001302">
    <property type="entry name" value="PSI_PsaI"/>
</dbReference>
<dbReference type="InterPro" id="IPR036357">
    <property type="entry name" value="PSI_PsaI_sf"/>
</dbReference>
<dbReference type="NCBIfam" id="TIGR03052">
    <property type="entry name" value="PS_I_psaI"/>
    <property type="match status" value="1"/>
</dbReference>
<dbReference type="PANTHER" id="PTHR35775">
    <property type="match status" value="1"/>
</dbReference>
<dbReference type="PANTHER" id="PTHR35775:SF2">
    <property type="entry name" value="PHOTOSYSTEM I REACTION CENTER SUBUNIT VIII"/>
    <property type="match status" value="1"/>
</dbReference>
<dbReference type="Pfam" id="PF00796">
    <property type="entry name" value="PSI_8"/>
    <property type="match status" value="1"/>
</dbReference>
<dbReference type="SUPFAM" id="SSF81540">
    <property type="entry name" value="Subunit VIII of photosystem I reaction centre, PsaI"/>
    <property type="match status" value="1"/>
</dbReference>
<protein>
    <recommendedName>
        <fullName>Photosystem I reaction center subunit VIII</fullName>
        <shortName>PSI-I</shortName>
    </recommendedName>
</protein>
<gene>
    <name type="primary">psaI</name>
</gene>
<name>PSAI_LOTJA</name>
<accession>Q9BBS0</accession>
<reference key="1">
    <citation type="journal article" date="2000" name="DNA Res.">
        <title>Complete structure of the chloroplast genome of a legume, Lotus japonicus.</title>
        <authorList>
            <person name="Kato T."/>
            <person name="Kaneko T."/>
            <person name="Sato S."/>
            <person name="Nakamura Y."/>
            <person name="Tabata S."/>
        </authorList>
    </citation>
    <scope>NUCLEOTIDE SEQUENCE [LARGE SCALE GENOMIC DNA]</scope>
    <source>
        <strain>cv. Miyakojima MG-20</strain>
    </source>
</reference>
<keyword id="KW-0150">Chloroplast</keyword>
<keyword id="KW-0472">Membrane</keyword>
<keyword id="KW-0602">Photosynthesis</keyword>
<keyword id="KW-0603">Photosystem I</keyword>
<keyword id="KW-0934">Plastid</keyword>
<keyword id="KW-0793">Thylakoid</keyword>
<keyword id="KW-0812">Transmembrane</keyword>
<keyword id="KW-1133">Transmembrane helix</keyword>
<evidence type="ECO:0000250" key="1"/>
<evidence type="ECO:0000255" key="2"/>
<evidence type="ECO:0000305" key="3"/>